<comment type="similarity">
    <text evidence="1">Belongs to the UPF0111 family.</text>
</comment>
<organism>
    <name type="scientific">Thermotoga maritima (strain ATCC 43589 / DSM 3109 / JCM 10099 / NBRC 100826 / MSB8)</name>
    <dbReference type="NCBI Taxonomy" id="243274"/>
    <lineage>
        <taxon>Bacteria</taxon>
        <taxon>Thermotogati</taxon>
        <taxon>Thermotogota</taxon>
        <taxon>Thermotogae</taxon>
        <taxon>Thermotogales</taxon>
        <taxon>Thermotogaceae</taxon>
        <taxon>Thermotoga</taxon>
    </lineage>
</organism>
<keyword id="KW-1185">Reference proteome</keyword>
<feature type="chain" id="PRO_0000154910" description="UPF0111 protein TM_0914">
    <location>
        <begin position="1"/>
        <end position="213"/>
    </location>
</feature>
<reference key="1">
    <citation type="journal article" date="1999" name="Nature">
        <title>Evidence for lateral gene transfer between Archaea and Bacteria from genome sequence of Thermotoga maritima.</title>
        <authorList>
            <person name="Nelson K.E."/>
            <person name="Clayton R.A."/>
            <person name="Gill S.R."/>
            <person name="Gwinn M.L."/>
            <person name="Dodson R.J."/>
            <person name="Haft D.H."/>
            <person name="Hickey E.K."/>
            <person name="Peterson J.D."/>
            <person name="Nelson W.C."/>
            <person name="Ketchum K.A."/>
            <person name="McDonald L.A."/>
            <person name="Utterback T.R."/>
            <person name="Malek J.A."/>
            <person name="Linher K.D."/>
            <person name="Garrett M.M."/>
            <person name="Stewart A.M."/>
            <person name="Cotton M.D."/>
            <person name="Pratt M.S."/>
            <person name="Phillips C.A."/>
            <person name="Richardson D.L."/>
            <person name="Heidelberg J.F."/>
            <person name="Sutton G.G."/>
            <person name="Fleischmann R.D."/>
            <person name="Eisen J.A."/>
            <person name="White O."/>
            <person name="Salzberg S.L."/>
            <person name="Smith H.O."/>
            <person name="Venter J.C."/>
            <person name="Fraser C.M."/>
        </authorList>
    </citation>
    <scope>NUCLEOTIDE SEQUENCE [LARGE SCALE GENOMIC DNA]</scope>
    <source>
        <strain>ATCC 43589 / DSM 3109 / JCM 10099 / NBRC 100826 / MSB8</strain>
    </source>
</reference>
<proteinExistence type="inferred from homology"/>
<dbReference type="EMBL" id="AE000512">
    <property type="protein sequence ID" value="AAD35995.1"/>
    <property type="molecule type" value="Genomic_DNA"/>
</dbReference>
<dbReference type="PIR" id="A72320">
    <property type="entry name" value="A72320"/>
</dbReference>
<dbReference type="RefSeq" id="NP_228722.1">
    <property type="nucleotide sequence ID" value="NC_000853.1"/>
</dbReference>
<dbReference type="RefSeq" id="WP_004080648.1">
    <property type="nucleotide sequence ID" value="NZ_CP011107.1"/>
</dbReference>
<dbReference type="SMR" id="Q9X016"/>
<dbReference type="FunCoup" id="Q9X016">
    <property type="interactions" value="89"/>
</dbReference>
<dbReference type="STRING" id="243274.TM_0914"/>
<dbReference type="PaxDb" id="243274-THEMA_00065"/>
<dbReference type="EnsemblBacteria" id="AAD35995">
    <property type="protein sequence ID" value="AAD35995"/>
    <property type="gene ID" value="TM_0914"/>
</dbReference>
<dbReference type="KEGG" id="tma:TM0914"/>
<dbReference type="KEGG" id="tmi:THEMA_00065"/>
<dbReference type="KEGG" id="tmm:Tmari_0916"/>
<dbReference type="KEGG" id="tmw:THMA_0936"/>
<dbReference type="eggNOG" id="COG1392">
    <property type="taxonomic scope" value="Bacteria"/>
</dbReference>
<dbReference type="InParanoid" id="Q9X016"/>
<dbReference type="OrthoDB" id="45684at2"/>
<dbReference type="Proteomes" id="UP000008183">
    <property type="component" value="Chromosome"/>
</dbReference>
<dbReference type="Gene3D" id="1.20.58.220">
    <property type="entry name" value="Phosphate transport system protein phou homolog 2, domain 2"/>
    <property type="match status" value="1"/>
</dbReference>
<dbReference type="InterPro" id="IPR002727">
    <property type="entry name" value="DUF47"/>
</dbReference>
<dbReference type="InterPro" id="IPR038078">
    <property type="entry name" value="PhoU-like_sf"/>
</dbReference>
<dbReference type="InterPro" id="IPR018445">
    <property type="entry name" value="Put_Phosphate_transp_reg"/>
</dbReference>
<dbReference type="NCBIfam" id="TIGR00153">
    <property type="entry name" value="TIGR00153 family protein"/>
    <property type="match status" value="1"/>
</dbReference>
<dbReference type="PANTHER" id="PTHR36536">
    <property type="entry name" value="UPF0111 PROTEIN HI_1603"/>
    <property type="match status" value="1"/>
</dbReference>
<dbReference type="PANTHER" id="PTHR36536:SF3">
    <property type="entry name" value="UPF0111 PROTEIN HI_1603"/>
    <property type="match status" value="1"/>
</dbReference>
<dbReference type="Pfam" id="PF01865">
    <property type="entry name" value="PhoU_div"/>
    <property type="match status" value="1"/>
</dbReference>
<accession>Q9X016</accession>
<protein>
    <recommendedName>
        <fullName>UPF0111 protein TM_0914</fullName>
    </recommendedName>
</protein>
<evidence type="ECO:0000305" key="1"/>
<sequence>MWFSGKKEQTIISLFFKHIDKVEETLKCVFDLIKKYLEDTDDIESLYLRTQRLESEADRLRRKTEMEMYSGAFLPNFRGDLLGLIESVDKVANKAEYVADLIVLQKPEVPHELKDLILSQMEYSLKAYESLKSALKFLFEDLERVEEFVLAVEKYEHDEDAVERTALRKLFEMDIERSVKLEVKELIRSIGDIADRTEDVSDRAEIILLKRRF</sequence>
<name>Y914_THEMA</name>
<gene>
    <name type="ordered locus">TM_0914</name>
</gene>